<dbReference type="EMBL" id="CP000026">
    <property type="protein sequence ID" value="AAV77414.1"/>
    <property type="molecule type" value="Genomic_DNA"/>
</dbReference>
<dbReference type="RefSeq" id="WP_001082322.1">
    <property type="nucleotide sequence ID" value="NC_006511.1"/>
</dbReference>
<dbReference type="SMR" id="Q5PH63"/>
<dbReference type="KEGG" id="spt:SPA1477"/>
<dbReference type="HOGENOM" id="CLU_166934_2_1_6"/>
<dbReference type="Proteomes" id="UP000008185">
    <property type="component" value="Chromosome"/>
</dbReference>
<dbReference type="GO" id="GO:0009279">
    <property type="term" value="C:cell outer membrane"/>
    <property type="evidence" value="ECO:0007669"/>
    <property type="project" value="UniProtKB-SubCell"/>
</dbReference>
<dbReference type="GO" id="GO:0005576">
    <property type="term" value="C:extracellular region"/>
    <property type="evidence" value="ECO:0007669"/>
    <property type="project" value="UniProtKB-KW"/>
</dbReference>
<dbReference type="GO" id="GO:0008289">
    <property type="term" value="F:lipid binding"/>
    <property type="evidence" value="ECO:0007669"/>
    <property type="project" value="UniProtKB-UniRule"/>
</dbReference>
<dbReference type="GO" id="GO:0042834">
    <property type="term" value="F:peptidoglycan binding"/>
    <property type="evidence" value="ECO:0007669"/>
    <property type="project" value="UniProtKB-UniRule"/>
</dbReference>
<dbReference type="GO" id="GO:0030258">
    <property type="term" value="P:lipid modification"/>
    <property type="evidence" value="ECO:0007669"/>
    <property type="project" value="UniProtKB-UniRule"/>
</dbReference>
<dbReference type="GO" id="GO:0043580">
    <property type="term" value="P:periplasmic space organization"/>
    <property type="evidence" value="ECO:0007669"/>
    <property type="project" value="UniProtKB-UniRule"/>
</dbReference>
<dbReference type="FunFam" id="1.20.5.190:FF:000002">
    <property type="entry name" value="Major outer membrane lipoprotein"/>
    <property type="match status" value="1"/>
</dbReference>
<dbReference type="Gene3D" id="1.20.5.190">
    <property type="match status" value="1"/>
</dbReference>
<dbReference type="HAMAP" id="MF_00843">
    <property type="entry name" value="Lpp"/>
    <property type="match status" value="1"/>
</dbReference>
<dbReference type="InterPro" id="IPR006817">
    <property type="entry name" value="Lipoprotein_leucine-zipper_dom"/>
</dbReference>
<dbReference type="InterPro" id="IPR016367">
    <property type="entry name" value="MOM_Lpp"/>
</dbReference>
<dbReference type="NCBIfam" id="NF040598">
    <property type="entry name" value="Ala_zip_lipo"/>
    <property type="match status" value="1"/>
</dbReference>
<dbReference type="NCBIfam" id="NF011925">
    <property type="entry name" value="PRK15396.1"/>
    <property type="match status" value="1"/>
</dbReference>
<dbReference type="PANTHER" id="PTHR38763:SF1">
    <property type="entry name" value="MAJOR OUTER MEMBRANE LIPOPROTEIN LPP"/>
    <property type="match status" value="1"/>
</dbReference>
<dbReference type="PANTHER" id="PTHR38763">
    <property type="entry name" value="MAJOR OUTER MEMBRANE PROLIPOPROTEIN LPP"/>
    <property type="match status" value="1"/>
</dbReference>
<dbReference type="Pfam" id="PF04728">
    <property type="entry name" value="LPP"/>
    <property type="match status" value="1"/>
</dbReference>
<dbReference type="PIRSF" id="PIRSF002855">
    <property type="entry name" value="Murein-lipoprotein"/>
    <property type="match status" value="1"/>
</dbReference>
<dbReference type="SUPFAM" id="SSF58042">
    <property type="entry name" value="Outer membrane lipoprotein"/>
    <property type="match status" value="1"/>
</dbReference>
<dbReference type="PROSITE" id="PS51257">
    <property type="entry name" value="PROKAR_LIPOPROTEIN"/>
    <property type="match status" value="1"/>
</dbReference>
<name>LPP2_SALPA</name>
<proteinExistence type="inferred from homology"/>
<comment type="function">
    <text evidence="2">A highly abundant outer membrane lipoprotein that controls the distance between the inner and outer membranes. The only protein known to be covalently linked to the peptidoglycan network (PGN). Also non-covalently binds the PGN. The link between the cell outer membrane and PGN contributes to maintenance of the structural and functional integrity of the cell envelope, and maintains the correct distance between the PGN and the outer membrane.</text>
</comment>
<comment type="subunit">
    <text evidence="2">Homotrimer.</text>
</comment>
<comment type="subcellular location">
    <subcellularLocation>
        <location evidence="2">Cell outer membrane</location>
        <topology evidence="2">Lipid-anchor</topology>
        <orientation evidence="2">Periplasmic side</orientation>
    </subcellularLocation>
    <subcellularLocation>
        <location evidence="2">Secreted</location>
        <location evidence="2">Cell wall</location>
        <topology evidence="2">Peptidoglycan-anchor</topology>
    </subcellularLocation>
    <text evidence="2">Attached via its lipidated N-terminus to the inner leaflet of the outer membrane. Attached to the peptidoglycan network (PGN) via its C-terminus.</text>
</comment>
<comment type="induction">
    <text evidence="1">This gene is probably poorly expressed.</text>
</comment>
<comment type="similarity">
    <text evidence="2">Belongs to the Lpp family.</text>
</comment>
<accession>Q5PH63</accession>
<sequence length="79" mass="8441">MNRTNKLILGAVVLGSALLAGCSSNAKIDQLSSDVQTLSAKVDQLSNDVNAMRSDIQAAKDDAARANQRLDNKVSRVRK</sequence>
<organism>
    <name type="scientific">Salmonella paratyphi A (strain ATCC 9150 / SARB42)</name>
    <dbReference type="NCBI Taxonomy" id="295319"/>
    <lineage>
        <taxon>Bacteria</taxon>
        <taxon>Pseudomonadati</taxon>
        <taxon>Pseudomonadota</taxon>
        <taxon>Gammaproteobacteria</taxon>
        <taxon>Enterobacterales</taxon>
        <taxon>Enterobacteriaceae</taxon>
        <taxon>Salmonella</taxon>
    </lineage>
</organism>
<keyword id="KW-0998">Cell outer membrane</keyword>
<keyword id="KW-0134">Cell wall</keyword>
<keyword id="KW-0175">Coiled coil</keyword>
<keyword id="KW-0449">Lipoprotein</keyword>
<keyword id="KW-0472">Membrane</keyword>
<keyword id="KW-0564">Palmitate</keyword>
<keyword id="KW-0572">Peptidoglycan-anchor</keyword>
<keyword id="KW-0677">Repeat</keyword>
<keyword id="KW-0964">Secreted</keyword>
<keyword id="KW-0732">Signal</keyword>
<feature type="signal peptide" evidence="2">
    <location>
        <begin position="1"/>
        <end position="21"/>
    </location>
</feature>
<feature type="chain" id="PRO_0000018340" description="Major outer membrane lipoprotein Lpp 2" evidence="2">
    <location>
        <begin position="22"/>
        <end position="79"/>
    </location>
</feature>
<feature type="repeat" evidence="2">
    <location>
        <begin position="25"/>
        <end position="35"/>
    </location>
</feature>
<feature type="repeat" evidence="2">
    <location>
        <begin position="39"/>
        <end position="49"/>
    </location>
</feature>
<feature type="region of interest" description="Disordered" evidence="3">
    <location>
        <begin position="60"/>
        <end position="79"/>
    </location>
</feature>
<feature type="coiled-coil region" evidence="2">
    <location>
        <begin position="28"/>
        <end position="76"/>
    </location>
</feature>
<feature type="modified residue" description="N6-murein peptidoglycan lysine" evidence="2">
    <location>
        <position position="79"/>
    </location>
</feature>
<feature type="lipid moiety-binding region" description="N-palmitoyl cysteine" evidence="2">
    <location>
        <position position="22"/>
    </location>
</feature>
<feature type="lipid moiety-binding region" description="S-diacylglycerol cysteine" evidence="2">
    <location>
        <position position="22"/>
    </location>
</feature>
<gene>
    <name evidence="2" type="primary">lpp2</name>
    <name type="synonym">lppB</name>
    <name type="ordered locus">SPA1477</name>
</gene>
<protein>
    <recommendedName>
        <fullName evidence="2">Major outer membrane lipoprotein Lpp 2</fullName>
    </recommendedName>
    <alternativeName>
        <fullName evidence="2">Braun lipoprotein 2</fullName>
        <shortName evidence="2">BLP 2</shortName>
    </alternativeName>
    <alternativeName>
        <fullName evidence="2">Murein lipoprotein 2</fullName>
    </alternativeName>
</protein>
<evidence type="ECO:0000250" key="1">
    <source>
        <dbReference type="UniProtKB" id="E8XH69"/>
    </source>
</evidence>
<evidence type="ECO:0000255" key="2">
    <source>
        <dbReference type="HAMAP-Rule" id="MF_00843"/>
    </source>
</evidence>
<evidence type="ECO:0000256" key="3">
    <source>
        <dbReference type="SAM" id="MobiDB-lite"/>
    </source>
</evidence>
<reference key="1">
    <citation type="journal article" date="2004" name="Nat. Genet.">
        <title>Comparison of genome degradation in Paratyphi A and Typhi, human-restricted serovars of Salmonella enterica that cause typhoid.</title>
        <authorList>
            <person name="McClelland M."/>
            <person name="Sanderson K.E."/>
            <person name="Clifton S.W."/>
            <person name="Latreille P."/>
            <person name="Porwollik S."/>
            <person name="Sabo A."/>
            <person name="Meyer R."/>
            <person name="Bieri T."/>
            <person name="Ozersky P."/>
            <person name="McLellan M."/>
            <person name="Harkins C.R."/>
            <person name="Wang C."/>
            <person name="Nguyen C."/>
            <person name="Berghoff A."/>
            <person name="Elliott G."/>
            <person name="Kohlberg S."/>
            <person name="Strong C."/>
            <person name="Du F."/>
            <person name="Carter J."/>
            <person name="Kremizki C."/>
            <person name="Layman D."/>
            <person name="Leonard S."/>
            <person name="Sun H."/>
            <person name="Fulton L."/>
            <person name="Nash W."/>
            <person name="Miner T."/>
            <person name="Minx P."/>
            <person name="Delehaunty K."/>
            <person name="Fronick C."/>
            <person name="Magrini V."/>
            <person name="Nhan M."/>
            <person name="Warren W."/>
            <person name="Florea L."/>
            <person name="Spieth J."/>
            <person name="Wilson R.K."/>
        </authorList>
    </citation>
    <scope>NUCLEOTIDE SEQUENCE [LARGE SCALE GENOMIC DNA]</scope>
    <source>
        <strain>ATCC 9150 / SARB42</strain>
    </source>
</reference>